<accession>P0A598</accession>
<accession>A0A1R3XVM6</accession>
<accession>O06405</accession>
<accession>O32851</accession>
<accession>X2BFC3</accession>
<evidence type="ECO:0000305" key="1"/>
<keyword id="KW-0328">Glycosyltransferase</keyword>
<keyword id="KW-1185">Reference proteome</keyword>
<keyword id="KW-0808">Transferase</keyword>
<feature type="chain" id="PRO_0000059247" description="Uncharacterized glycosyltransferase Mb0553">
    <location>
        <begin position="1"/>
        <end position="218"/>
    </location>
</feature>
<reference key="1">
    <citation type="submission" date="1997-06" db="EMBL/GenBank/DDBJ databases">
        <title>Mycobacterium bovis BCG clone E4863.</title>
        <authorList>
            <person name="Kim J.K."/>
            <person name="Choe Y.K."/>
        </authorList>
    </citation>
    <scope>NUCLEOTIDE SEQUENCE [GENOMIC DNA]</scope>
    <source>
        <strain>BCG / Pasteur</strain>
    </source>
</reference>
<reference key="2">
    <citation type="journal article" date="2003" name="Proc. Natl. Acad. Sci. U.S.A.">
        <title>The complete genome sequence of Mycobacterium bovis.</title>
        <authorList>
            <person name="Garnier T."/>
            <person name="Eiglmeier K."/>
            <person name="Camus J.-C."/>
            <person name="Medina N."/>
            <person name="Mansoor H."/>
            <person name="Pryor M."/>
            <person name="Duthoy S."/>
            <person name="Grondin S."/>
            <person name="Lacroix C."/>
            <person name="Monsempe C."/>
            <person name="Simon S."/>
            <person name="Harris B."/>
            <person name="Atkin R."/>
            <person name="Doggett J."/>
            <person name="Mayes R."/>
            <person name="Keating L."/>
            <person name="Wheeler P.R."/>
            <person name="Parkhill J."/>
            <person name="Barrell B.G."/>
            <person name="Cole S.T."/>
            <person name="Gordon S.V."/>
            <person name="Hewinson R.G."/>
        </authorList>
    </citation>
    <scope>NUCLEOTIDE SEQUENCE [LARGE SCALE GENOMIC DNA]</scope>
    <source>
        <strain>ATCC BAA-935 / AF2122/97</strain>
    </source>
</reference>
<reference key="3">
    <citation type="journal article" date="2017" name="Genome Announc.">
        <title>Updated reference genome sequence and annotation of Mycobacterium bovis AF2122/97.</title>
        <authorList>
            <person name="Malone K.M."/>
            <person name="Farrell D."/>
            <person name="Stuber T.P."/>
            <person name="Schubert O.T."/>
            <person name="Aebersold R."/>
            <person name="Robbe-Austerman S."/>
            <person name="Gordon S.V."/>
        </authorList>
    </citation>
    <scope>NUCLEOTIDE SEQUENCE [LARGE SCALE GENOMIC DNA]</scope>
    <scope>GENOME REANNOTATION</scope>
    <source>
        <strain>ATCC BAA-935 / AF2122/97</strain>
    </source>
</reference>
<proteinExistence type="inferred from homology"/>
<dbReference type="EC" id="2.4.-.-"/>
<dbReference type="EMBL" id="AF009829">
    <property type="protein sequence ID" value="AAB63812.1"/>
    <property type="molecule type" value="Genomic_DNA"/>
</dbReference>
<dbReference type="EMBL" id="LT708304">
    <property type="protein sequence ID" value="SIT99149.1"/>
    <property type="status" value="ALT_INIT"/>
    <property type="molecule type" value="Genomic_DNA"/>
</dbReference>
<dbReference type="RefSeq" id="WP_003898499.1">
    <property type="nucleotide sequence ID" value="NC_002945.4"/>
</dbReference>
<dbReference type="SMR" id="P0A598"/>
<dbReference type="PATRIC" id="fig|233413.5.peg.601"/>
<dbReference type="Proteomes" id="UP000001419">
    <property type="component" value="Chromosome"/>
</dbReference>
<dbReference type="GO" id="GO:0016757">
    <property type="term" value="F:glycosyltransferase activity"/>
    <property type="evidence" value="ECO:0007669"/>
    <property type="project" value="UniProtKB-KW"/>
</dbReference>
<dbReference type="CDD" id="cd04179">
    <property type="entry name" value="DPM_DPG-synthase_like"/>
    <property type="match status" value="1"/>
</dbReference>
<dbReference type="Gene3D" id="3.90.550.10">
    <property type="entry name" value="Spore Coat Polysaccharide Biosynthesis Protein SpsA, Chain A"/>
    <property type="match status" value="1"/>
</dbReference>
<dbReference type="InterPro" id="IPR001173">
    <property type="entry name" value="Glyco_trans_2-like"/>
</dbReference>
<dbReference type="InterPro" id="IPR050256">
    <property type="entry name" value="Glycosyltransferase_2"/>
</dbReference>
<dbReference type="InterPro" id="IPR029044">
    <property type="entry name" value="Nucleotide-diphossugar_trans"/>
</dbReference>
<dbReference type="PANTHER" id="PTHR48090:SF7">
    <property type="entry name" value="RFBJ PROTEIN"/>
    <property type="match status" value="1"/>
</dbReference>
<dbReference type="PANTHER" id="PTHR48090">
    <property type="entry name" value="UNDECAPRENYL-PHOSPHATE 4-DEOXY-4-FORMAMIDO-L-ARABINOSE TRANSFERASE-RELATED"/>
    <property type="match status" value="1"/>
</dbReference>
<dbReference type="Pfam" id="PF00535">
    <property type="entry name" value="Glycos_transf_2"/>
    <property type="match status" value="1"/>
</dbReference>
<dbReference type="SUPFAM" id="SSF53448">
    <property type="entry name" value="Nucleotide-diphospho-sugar transferases"/>
    <property type="match status" value="1"/>
</dbReference>
<name>Y553_MYCBO</name>
<sequence length="218" mass="23117">MAGDAVTVVLPCLNEEESLPAVLAAIPAGYRALVVDNNSTDDTATVAARHGAQVVVEPRPGYGSAVHAGVLAATTPIVAVIDADGSMDAGDLPKLVAELDKGADLVTGRRRPVAGLHWPWVARVGTVVMSWRLRTRHRLPVHDIAPMRVARREALLDLGVVDRRSGYPLELLVRAAAAGWRVVELDVSYGPRTGGKSKVSGSLRGSIIAILDFWKVIS</sequence>
<comment type="similarity">
    <text evidence="1">Belongs to the glycosyltransferase 2 family.</text>
</comment>
<comment type="sequence caution" evidence="1">
    <conflict type="erroneous initiation">
        <sequence resource="EMBL-CDS" id="SIT99149"/>
    </conflict>
    <text>Truncated N-terminus.</text>
</comment>
<organism>
    <name type="scientific">Mycobacterium bovis (strain ATCC BAA-935 / AF2122/97)</name>
    <dbReference type="NCBI Taxonomy" id="233413"/>
    <lineage>
        <taxon>Bacteria</taxon>
        <taxon>Bacillati</taxon>
        <taxon>Actinomycetota</taxon>
        <taxon>Actinomycetes</taxon>
        <taxon>Mycobacteriales</taxon>
        <taxon>Mycobacteriaceae</taxon>
        <taxon>Mycobacterium</taxon>
        <taxon>Mycobacterium tuberculosis complex</taxon>
    </lineage>
</organism>
<gene>
    <name type="ordered locus">BQ2027_MB0553</name>
    <name type="ORF">MBE4863b</name>
</gene>
<protein>
    <recommendedName>
        <fullName>Uncharacterized glycosyltransferase Mb0553</fullName>
        <ecNumber>2.4.-.-</ecNumber>
    </recommendedName>
</protein>